<comment type="function">
    <text evidence="1">Assembles around the rod to form the L-ring and probably protects the motor/basal body from shearing forces during rotation.</text>
</comment>
<comment type="subunit">
    <text evidence="1">The basal body constitutes a major portion of the flagellar organelle and consists of four rings (L,P,S, and M) mounted on a central rod.</text>
</comment>
<comment type="subcellular location">
    <subcellularLocation>
        <location evidence="1">Cell outer membrane</location>
        <topology evidence="1">Lipid-anchor</topology>
    </subcellularLocation>
    <subcellularLocation>
        <location evidence="1">Bacterial flagellum basal body</location>
    </subcellularLocation>
</comment>
<comment type="similarity">
    <text evidence="1">Belongs to the FlgH family.</text>
</comment>
<protein>
    <recommendedName>
        <fullName evidence="1">Flagellar L-ring protein</fullName>
    </recommendedName>
    <alternativeName>
        <fullName evidence="1">Basal body L-ring protein</fullName>
    </alternativeName>
</protein>
<proteinExistence type="inferred from homology"/>
<dbReference type="EMBL" id="AP008229">
    <property type="protein sequence ID" value="BAE69189.1"/>
    <property type="molecule type" value="Genomic_DNA"/>
</dbReference>
<dbReference type="RefSeq" id="WP_011259207.1">
    <property type="nucleotide sequence ID" value="NC_007705.1"/>
</dbReference>
<dbReference type="SMR" id="Q2P2N8"/>
<dbReference type="KEGG" id="xom:XOO2434"/>
<dbReference type="HOGENOM" id="CLU_069313_0_1_6"/>
<dbReference type="GO" id="GO:0009427">
    <property type="term" value="C:bacterial-type flagellum basal body, distal rod, L ring"/>
    <property type="evidence" value="ECO:0007669"/>
    <property type="project" value="InterPro"/>
</dbReference>
<dbReference type="GO" id="GO:0009279">
    <property type="term" value="C:cell outer membrane"/>
    <property type="evidence" value="ECO:0007669"/>
    <property type="project" value="UniProtKB-SubCell"/>
</dbReference>
<dbReference type="GO" id="GO:0003774">
    <property type="term" value="F:cytoskeletal motor activity"/>
    <property type="evidence" value="ECO:0007669"/>
    <property type="project" value="InterPro"/>
</dbReference>
<dbReference type="GO" id="GO:0071973">
    <property type="term" value="P:bacterial-type flagellum-dependent cell motility"/>
    <property type="evidence" value="ECO:0007669"/>
    <property type="project" value="InterPro"/>
</dbReference>
<dbReference type="HAMAP" id="MF_00415">
    <property type="entry name" value="FlgH"/>
    <property type="match status" value="1"/>
</dbReference>
<dbReference type="InterPro" id="IPR000527">
    <property type="entry name" value="Flag_Lring"/>
</dbReference>
<dbReference type="NCBIfam" id="NF001304">
    <property type="entry name" value="PRK00249.1-4"/>
    <property type="match status" value="1"/>
</dbReference>
<dbReference type="PANTHER" id="PTHR34933">
    <property type="entry name" value="FLAGELLAR L-RING PROTEIN"/>
    <property type="match status" value="1"/>
</dbReference>
<dbReference type="PANTHER" id="PTHR34933:SF1">
    <property type="entry name" value="FLAGELLAR L-RING PROTEIN"/>
    <property type="match status" value="1"/>
</dbReference>
<dbReference type="Pfam" id="PF02107">
    <property type="entry name" value="FlgH"/>
    <property type="match status" value="1"/>
</dbReference>
<dbReference type="PRINTS" id="PR01008">
    <property type="entry name" value="FLGLRINGFLGH"/>
</dbReference>
<dbReference type="PROSITE" id="PS51257">
    <property type="entry name" value="PROKAR_LIPOPROTEIN"/>
    <property type="match status" value="1"/>
</dbReference>
<gene>
    <name evidence="1" type="primary">flgH</name>
    <name type="ordered locus">XOO2434</name>
</gene>
<organism>
    <name type="scientific">Xanthomonas oryzae pv. oryzae (strain MAFF 311018)</name>
    <dbReference type="NCBI Taxonomy" id="342109"/>
    <lineage>
        <taxon>Bacteria</taxon>
        <taxon>Pseudomonadati</taxon>
        <taxon>Pseudomonadota</taxon>
        <taxon>Gammaproteobacteria</taxon>
        <taxon>Lysobacterales</taxon>
        <taxon>Lysobacteraceae</taxon>
        <taxon>Xanthomonas</taxon>
    </lineage>
</organism>
<sequence length="230" mass="23783">MSRPPLLSSACLAATCSLLLGGCVAAGDVRPYAAMAPIVPVVAPTVQPTAGAIYAAGPGLNLYGDRRARDVGDLLTITLIESTTASSSANTSTSKKDATTMASPTLLGAPLTVAGLDVLQNTLKGDRAFDGKGNTAQSNRMQGSVTVTVIQRLPNGNLVVQGQKNLRLNQGDELVQVQGIVRDADIAPDNTIPSSKVAEARIAYGGRGAIAQSNAMGWLSRFFNSRLSPY</sequence>
<keyword id="KW-0975">Bacterial flagellum</keyword>
<keyword id="KW-0998">Cell outer membrane</keyword>
<keyword id="KW-0449">Lipoprotein</keyword>
<keyword id="KW-0472">Membrane</keyword>
<keyword id="KW-0564">Palmitate</keyword>
<keyword id="KW-0732">Signal</keyword>
<feature type="signal peptide" evidence="1">
    <location>
        <begin position="1"/>
        <end position="15"/>
    </location>
</feature>
<feature type="chain" id="PRO_0000236844" description="Flagellar L-ring protein">
    <location>
        <begin position="16"/>
        <end position="230"/>
    </location>
</feature>
<feature type="lipid moiety-binding region" description="N-palmitoyl cysteine" evidence="1">
    <location>
        <position position="16"/>
    </location>
</feature>
<feature type="lipid moiety-binding region" description="S-diacylglycerol cysteine" evidence="1">
    <location>
        <position position="16"/>
    </location>
</feature>
<name>FLGH_XANOM</name>
<accession>Q2P2N8</accession>
<evidence type="ECO:0000255" key="1">
    <source>
        <dbReference type="HAMAP-Rule" id="MF_00415"/>
    </source>
</evidence>
<reference key="1">
    <citation type="journal article" date="2005" name="Jpn. Agric. Res. Q.">
        <title>Genome sequence of Xanthomonas oryzae pv. oryzae suggests contribution of large numbers of effector genes and insertion sequences to its race diversity.</title>
        <authorList>
            <person name="Ochiai H."/>
            <person name="Inoue Y."/>
            <person name="Takeya M."/>
            <person name="Sasaki A."/>
            <person name="Kaku H."/>
        </authorList>
    </citation>
    <scope>NUCLEOTIDE SEQUENCE [LARGE SCALE GENOMIC DNA]</scope>
    <source>
        <strain>MAFF 311018</strain>
    </source>
</reference>